<reference key="1">
    <citation type="journal article" date="2004" name="Nat. Genet.">
        <title>Comparison of genome degradation in Paratyphi A and Typhi, human-restricted serovars of Salmonella enterica that cause typhoid.</title>
        <authorList>
            <person name="McClelland M."/>
            <person name="Sanderson K.E."/>
            <person name="Clifton S.W."/>
            <person name="Latreille P."/>
            <person name="Porwollik S."/>
            <person name="Sabo A."/>
            <person name="Meyer R."/>
            <person name="Bieri T."/>
            <person name="Ozersky P."/>
            <person name="McLellan M."/>
            <person name="Harkins C.R."/>
            <person name="Wang C."/>
            <person name="Nguyen C."/>
            <person name="Berghoff A."/>
            <person name="Elliott G."/>
            <person name="Kohlberg S."/>
            <person name="Strong C."/>
            <person name="Du F."/>
            <person name="Carter J."/>
            <person name="Kremizki C."/>
            <person name="Layman D."/>
            <person name="Leonard S."/>
            <person name="Sun H."/>
            <person name="Fulton L."/>
            <person name="Nash W."/>
            <person name="Miner T."/>
            <person name="Minx P."/>
            <person name="Delehaunty K."/>
            <person name="Fronick C."/>
            <person name="Magrini V."/>
            <person name="Nhan M."/>
            <person name="Warren W."/>
            <person name="Florea L."/>
            <person name="Spieth J."/>
            <person name="Wilson R.K."/>
        </authorList>
    </citation>
    <scope>NUCLEOTIDE SEQUENCE [LARGE SCALE GENOMIC DNA]</scope>
    <source>
        <strain>ATCC 9150 / SARB42</strain>
    </source>
</reference>
<feature type="chain" id="PRO_1000019366" description="Ferrochelatase">
    <location>
        <begin position="1"/>
        <end position="320"/>
    </location>
</feature>
<feature type="binding site" evidence="1">
    <location>
        <position position="194"/>
    </location>
    <ligand>
        <name>Fe cation</name>
        <dbReference type="ChEBI" id="CHEBI:24875"/>
    </ligand>
</feature>
<feature type="binding site" evidence="1">
    <location>
        <position position="275"/>
    </location>
    <ligand>
        <name>Fe cation</name>
        <dbReference type="ChEBI" id="CHEBI:24875"/>
    </ligand>
</feature>
<comment type="function">
    <text evidence="1">Catalyzes the ferrous insertion into protoporphyrin IX.</text>
</comment>
<comment type="catalytic activity">
    <reaction evidence="1">
        <text>heme b + 2 H(+) = protoporphyrin IX + Fe(2+)</text>
        <dbReference type="Rhea" id="RHEA:22584"/>
        <dbReference type="ChEBI" id="CHEBI:15378"/>
        <dbReference type="ChEBI" id="CHEBI:29033"/>
        <dbReference type="ChEBI" id="CHEBI:57306"/>
        <dbReference type="ChEBI" id="CHEBI:60344"/>
        <dbReference type="EC" id="4.98.1.1"/>
    </reaction>
</comment>
<comment type="pathway">
    <text evidence="1">Porphyrin-containing compound metabolism; protoheme biosynthesis; protoheme from protoporphyrin-IX: step 1/1.</text>
</comment>
<comment type="subunit">
    <text evidence="1">Monomer.</text>
</comment>
<comment type="subcellular location">
    <subcellularLocation>
        <location evidence="1">Cytoplasm</location>
    </subcellularLocation>
</comment>
<comment type="similarity">
    <text evidence="1">Belongs to the ferrochelatase family.</text>
</comment>
<keyword id="KW-0963">Cytoplasm</keyword>
<keyword id="KW-0350">Heme biosynthesis</keyword>
<keyword id="KW-0408">Iron</keyword>
<keyword id="KW-0456">Lyase</keyword>
<keyword id="KW-0479">Metal-binding</keyword>
<keyword id="KW-0627">Porphyrin biosynthesis</keyword>
<dbReference type="EC" id="4.98.1.1" evidence="1"/>
<dbReference type="EMBL" id="CP000026">
    <property type="protein sequence ID" value="AAV78119.1"/>
    <property type="molecule type" value="Genomic_DNA"/>
</dbReference>
<dbReference type="RefSeq" id="WP_001250080.1">
    <property type="nucleotide sequence ID" value="NC_006511.1"/>
</dbReference>
<dbReference type="SMR" id="Q5PFJ1"/>
<dbReference type="KEGG" id="spt:SPA2233"/>
<dbReference type="HOGENOM" id="CLU_018884_0_0_6"/>
<dbReference type="UniPathway" id="UPA00252">
    <property type="reaction ID" value="UER00325"/>
</dbReference>
<dbReference type="Proteomes" id="UP000008185">
    <property type="component" value="Chromosome"/>
</dbReference>
<dbReference type="GO" id="GO:0005737">
    <property type="term" value="C:cytoplasm"/>
    <property type="evidence" value="ECO:0007669"/>
    <property type="project" value="UniProtKB-SubCell"/>
</dbReference>
<dbReference type="GO" id="GO:0004325">
    <property type="term" value="F:ferrochelatase activity"/>
    <property type="evidence" value="ECO:0007669"/>
    <property type="project" value="UniProtKB-UniRule"/>
</dbReference>
<dbReference type="GO" id="GO:0046872">
    <property type="term" value="F:metal ion binding"/>
    <property type="evidence" value="ECO:0007669"/>
    <property type="project" value="UniProtKB-KW"/>
</dbReference>
<dbReference type="GO" id="GO:0006783">
    <property type="term" value="P:heme biosynthetic process"/>
    <property type="evidence" value="ECO:0007669"/>
    <property type="project" value="UniProtKB-UniRule"/>
</dbReference>
<dbReference type="CDD" id="cd00419">
    <property type="entry name" value="Ferrochelatase_C"/>
    <property type="match status" value="1"/>
</dbReference>
<dbReference type="CDD" id="cd03411">
    <property type="entry name" value="Ferrochelatase_N"/>
    <property type="match status" value="1"/>
</dbReference>
<dbReference type="FunFam" id="3.40.50.1400:FF:000004">
    <property type="entry name" value="Ferrochelatase"/>
    <property type="match status" value="1"/>
</dbReference>
<dbReference type="Gene3D" id="3.40.50.1400">
    <property type="match status" value="2"/>
</dbReference>
<dbReference type="HAMAP" id="MF_00323">
    <property type="entry name" value="Ferrochelatase"/>
    <property type="match status" value="1"/>
</dbReference>
<dbReference type="InterPro" id="IPR001015">
    <property type="entry name" value="Ferrochelatase"/>
</dbReference>
<dbReference type="InterPro" id="IPR019772">
    <property type="entry name" value="Ferrochelatase_AS"/>
</dbReference>
<dbReference type="InterPro" id="IPR033644">
    <property type="entry name" value="Ferrochelatase_C"/>
</dbReference>
<dbReference type="InterPro" id="IPR033659">
    <property type="entry name" value="Ferrochelatase_N"/>
</dbReference>
<dbReference type="NCBIfam" id="TIGR00109">
    <property type="entry name" value="hemH"/>
    <property type="match status" value="1"/>
</dbReference>
<dbReference type="PANTHER" id="PTHR11108">
    <property type="entry name" value="FERROCHELATASE"/>
    <property type="match status" value="1"/>
</dbReference>
<dbReference type="PANTHER" id="PTHR11108:SF1">
    <property type="entry name" value="FERROCHELATASE, MITOCHONDRIAL"/>
    <property type="match status" value="1"/>
</dbReference>
<dbReference type="Pfam" id="PF00762">
    <property type="entry name" value="Ferrochelatase"/>
    <property type="match status" value="1"/>
</dbReference>
<dbReference type="SUPFAM" id="SSF53800">
    <property type="entry name" value="Chelatase"/>
    <property type="match status" value="1"/>
</dbReference>
<dbReference type="PROSITE" id="PS00534">
    <property type="entry name" value="FERROCHELATASE"/>
    <property type="match status" value="1"/>
</dbReference>
<proteinExistence type="inferred from homology"/>
<accession>Q5PFJ1</accession>
<protein>
    <recommendedName>
        <fullName evidence="1">Ferrochelatase</fullName>
        <ecNumber evidence="1">4.98.1.1</ecNumber>
    </recommendedName>
    <alternativeName>
        <fullName evidence="1">Heme synthase</fullName>
    </alternativeName>
    <alternativeName>
        <fullName evidence="1">Protoheme ferro-lyase</fullName>
    </alternativeName>
</protein>
<name>HEMH_SALPA</name>
<organism>
    <name type="scientific">Salmonella paratyphi A (strain ATCC 9150 / SARB42)</name>
    <dbReference type="NCBI Taxonomy" id="295319"/>
    <lineage>
        <taxon>Bacteria</taxon>
        <taxon>Pseudomonadati</taxon>
        <taxon>Pseudomonadota</taxon>
        <taxon>Gammaproteobacteria</taxon>
        <taxon>Enterobacterales</taxon>
        <taxon>Enterobacteriaceae</taxon>
        <taxon>Salmonella</taxon>
    </lineage>
</organism>
<evidence type="ECO:0000255" key="1">
    <source>
        <dbReference type="HAMAP-Rule" id="MF_00323"/>
    </source>
</evidence>
<gene>
    <name evidence="1" type="primary">hemH</name>
    <name type="ordered locus">SPA2233</name>
</gene>
<sequence>MRQTKTGILLANLGTPDAPTPEAVKRYLKQFLSDRRVVDTPRLLWWPLLRGVILPLRSPRVAKLYQSIWMDGGSPLMVYSREQQQALAARLPDTPVALGMSYGSPSLESAVDELLASDVDHIVVLPLYPQYSCSTVGAVWDELGRILARKRRIPGISFIRDYADDGAYIDALAKSARESFARHGEPDVLLLSYHGIPQRYADEGDDYPQRCRDTTRELVSALGLPPEKVMMTFQSRFGREPWLTPYTDETLKMLGEKGTGHIQVMCPGFAADCLETLEEIAEQNREIFLEVGGKKYAYIPALNATPEHIDMMLKLTAPYR</sequence>